<organism>
    <name type="scientific">Clostridium acetobutylicum (strain ATCC 824 / DSM 792 / JCM 1419 / IAM 19013 / LMG 5710 / NBRC 13948 / NRRL B-527 / VKM B-1787 / 2291 / W)</name>
    <dbReference type="NCBI Taxonomy" id="272562"/>
    <lineage>
        <taxon>Bacteria</taxon>
        <taxon>Bacillati</taxon>
        <taxon>Bacillota</taxon>
        <taxon>Clostridia</taxon>
        <taxon>Eubacteriales</taxon>
        <taxon>Clostridiaceae</taxon>
        <taxon>Clostridium</taxon>
    </lineage>
</organism>
<reference key="1">
    <citation type="journal article" date="2001" name="J. Bacteriol.">
        <title>Genome sequence and comparative analysis of the solvent-producing bacterium Clostridium acetobutylicum.</title>
        <authorList>
            <person name="Noelling J."/>
            <person name="Breton G."/>
            <person name="Omelchenko M.V."/>
            <person name="Makarova K.S."/>
            <person name="Zeng Q."/>
            <person name="Gibson R."/>
            <person name="Lee H.M."/>
            <person name="Dubois J."/>
            <person name="Qiu D."/>
            <person name="Hitti J."/>
            <person name="Wolf Y.I."/>
            <person name="Tatusov R.L."/>
            <person name="Sabathe F."/>
            <person name="Doucette-Stamm L.A."/>
            <person name="Soucaille P."/>
            <person name="Daly M.J."/>
            <person name="Bennett G.N."/>
            <person name="Koonin E.V."/>
            <person name="Smith D.R."/>
        </authorList>
    </citation>
    <scope>NUCLEOTIDE SEQUENCE [LARGE SCALE GENOMIC DNA]</scope>
    <source>
        <strain>ATCC 824 / DSM 792 / JCM 1419 / IAM 19013 / LMG 5710 / NBRC 13948 / NRRL B-527 / VKM B-1787 / 2291 / W</strain>
    </source>
</reference>
<dbReference type="EMBL" id="AE001437">
    <property type="protein sequence ID" value="AAK80598.1"/>
    <property type="molecule type" value="Genomic_DNA"/>
</dbReference>
<dbReference type="PIR" id="C97226">
    <property type="entry name" value="C97226"/>
</dbReference>
<dbReference type="RefSeq" id="NP_349258.1">
    <property type="nucleotide sequence ID" value="NC_003030.1"/>
</dbReference>
<dbReference type="RefSeq" id="WP_010965939.1">
    <property type="nucleotide sequence ID" value="NC_003030.1"/>
</dbReference>
<dbReference type="SMR" id="Q97FS6"/>
<dbReference type="STRING" id="272562.CA_C2651"/>
<dbReference type="KEGG" id="cac:CA_C2651"/>
<dbReference type="PATRIC" id="fig|272562.8.peg.2840"/>
<dbReference type="eggNOG" id="COG0543">
    <property type="taxonomic scope" value="Bacteria"/>
</dbReference>
<dbReference type="HOGENOM" id="CLU_003827_1_2_9"/>
<dbReference type="OrthoDB" id="9789468at2"/>
<dbReference type="UniPathway" id="UPA00070">
    <property type="reaction ID" value="UER00945"/>
</dbReference>
<dbReference type="Proteomes" id="UP000000814">
    <property type="component" value="Chromosome"/>
</dbReference>
<dbReference type="GO" id="GO:0051537">
    <property type="term" value="F:2 iron, 2 sulfur cluster binding"/>
    <property type="evidence" value="ECO:0007669"/>
    <property type="project" value="UniProtKB-KW"/>
</dbReference>
<dbReference type="GO" id="GO:0009055">
    <property type="term" value="F:electron transfer activity"/>
    <property type="evidence" value="ECO:0007669"/>
    <property type="project" value="UniProtKB-UniRule"/>
</dbReference>
<dbReference type="GO" id="GO:0050660">
    <property type="term" value="F:flavin adenine dinucleotide binding"/>
    <property type="evidence" value="ECO:0007669"/>
    <property type="project" value="InterPro"/>
</dbReference>
<dbReference type="GO" id="GO:0046872">
    <property type="term" value="F:metal ion binding"/>
    <property type="evidence" value="ECO:0007669"/>
    <property type="project" value="UniProtKB-KW"/>
</dbReference>
<dbReference type="GO" id="GO:0016491">
    <property type="term" value="F:oxidoreductase activity"/>
    <property type="evidence" value="ECO:0007669"/>
    <property type="project" value="InterPro"/>
</dbReference>
<dbReference type="GO" id="GO:0044205">
    <property type="term" value="P:'de novo' UMP biosynthetic process"/>
    <property type="evidence" value="ECO:0007669"/>
    <property type="project" value="UniProtKB-UniRule"/>
</dbReference>
<dbReference type="CDD" id="cd06218">
    <property type="entry name" value="DHOD_e_trans"/>
    <property type="match status" value="1"/>
</dbReference>
<dbReference type="Gene3D" id="2.10.240.10">
    <property type="entry name" value="Dihydroorotate dehydrogenase, electron transfer subunit"/>
    <property type="match status" value="1"/>
</dbReference>
<dbReference type="Gene3D" id="3.40.50.80">
    <property type="entry name" value="Nucleotide-binding domain of ferredoxin-NADP reductase (FNR) module"/>
    <property type="match status" value="1"/>
</dbReference>
<dbReference type="Gene3D" id="2.40.30.10">
    <property type="entry name" value="Translation factors"/>
    <property type="match status" value="1"/>
</dbReference>
<dbReference type="HAMAP" id="MF_01211">
    <property type="entry name" value="DHODB_Fe_S_bind"/>
    <property type="match status" value="1"/>
</dbReference>
<dbReference type="InterPro" id="IPR012165">
    <property type="entry name" value="Cyt_c3_hydrogenase_gsu"/>
</dbReference>
<dbReference type="InterPro" id="IPR037117">
    <property type="entry name" value="Dihydroorotate_DH_ele_sf"/>
</dbReference>
<dbReference type="InterPro" id="IPR019480">
    <property type="entry name" value="Dihydroorotate_DH_Fe-S-bd"/>
</dbReference>
<dbReference type="InterPro" id="IPR023455">
    <property type="entry name" value="Dihydroorotate_DHASE_ETsu"/>
</dbReference>
<dbReference type="InterPro" id="IPR017927">
    <property type="entry name" value="FAD-bd_FR_type"/>
</dbReference>
<dbReference type="InterPro" id="IPR039261">
    <property type="entry name" value="FNR_nucleotide-bd"/>
</dbReference>
<dbReference type="InterPro" id="IPR050353">
    <property type="entry name" value="PyrK_electron_transfer"/>
</dbReference>
<dbReference type="InterPro" id="IPR017938">
    <property type="entry name" value="Riboflavin_synthase-like_b-brl"/>
</dbReference>
<dbReference type="NCBIfam" id="NF000798">
    <property type="entry name" value="PRK00054.1-3"/>
    <property type="match status" value="1"/>
</dbReference>
<dbReference type="PANTHER" id="PTHR43513">
    <property type="entry name" value="DIHYDROOROTATE DEHYDROGENASE B (NAD(+)), ELECTRON TRANSFER SUBUNIT"/>
    <property type="match status" value="1"/>
</dbReference>
<dbReference type="PANTHER" id="PTHR43513:SF3">
    <property type="entry name" value="DIHYDROOROTATE DEHYDROGENASE B (NAD(+)), ELECTRON TRANSFER SUBUNIT-RELATED"/>
    <property type="match status" value="1"/>
</dbReference>
<dbReference type="Pfam" id="PF10418">
    <property type="entry name" value="DHODB_Fe-S_bind"/>
    <property type="match status" value="1"/>
</dbReference>
<dbReference type="PIRSF" id="PIRSF006816">
    <property type="entry name" value="Cyc3_hyd_g"/>
    <property type="match status" value="1"/>
</dbReference>
<dbReference type="SUPFAM" id="SSF52343">
    <property type="entry name" value="Ferredoxin reductase-like, C-terminal NADP-linked domain"/>
    <property type="match status" value="1"/>
</dbReference>
<dbReference type="SUPFAM" id="SSF63380">
    <property type="entry name" value="Riboflavin synthase domain-like"/>
    <property type="match status" value="1"/>
</dbReference>
<dbReference type="PROSITE" id="PS51384">
    <property type="entry name" value="FAD_FR"/>
    <property type="match status" value="1"/>
</dbReference>
<gene>
    <name evidence="1" type="primary">pyrK</name>
    <name type="ordered locus">CA_C2651</name>
</gene>
<feature type="chain" id="PRO_0000148358" description="Dihydroorotate dehydrogenase B (NAD(+)), electron transfer subunit">
    <location>
        <begin position="1"/>
        <end position="246"/>
    </location>
</feature>
<feature type="domain" description="FAD-binding FR-type" evidence="1">
    <location>
        <begin position="3"/>
        <end position="97"/>
    </location>
</feature>
<feature type="binding site" evidence="1">
    <location>
        <begin position="50"/>
        <end position="53"/>
    </location>
    <ligand>
        <name>FAD</name>
        <dbReference type="ChEBI" id="CHEBI:57692"/>
    </ligand>
</feature>
<feature type="binding site" evidence="1">
    <location>
        <begin position="72"/>
        <end position="73"/>
    </location>
    <ligand>
        <name>FAD</name>
        <dbReference type="ChEBI" id="CHEBI:57692"/>
    </ligand>
</feature>
<feature type="binding site" evidence="1">
    <location>
        <position position="211"/>
    </location>
    <ligand>
        <name>[2Fe-2S] cluster</name>
        <dbReference type="ChEBI" id="CHEBI:190135"/>
    </ligand>
</feature>
<feature type="binding site" evidence="1">
    <location>
        <position position="216"/>
    </location>
    <ligand>
        <name>[2Fe-2S] cluster</name>
        <dbReference type="ChEBI" id="CHEBI:190135"/>
    </ligand>
</feature>
<feature type="binding site" evidence="1">
    <location>
        <position position="219"/>
    </location>
    <ligand>
        <name>[2Fe-2S] cluster</name>
        <dbReference type="ChEBI" id="CHEBI:190135"/>
    </ligand>
</feature>
<feature type="binding site" evidence="1">
    <location>
        <position position="231"/>
    </location>
    <ligand>
        <name>[2Fe-2S] cluster</name>
        <dbReference type="ChEBI" id="CHEBI:190135"/>
    </ligand>
</feature>
<accession>Q97FS6</accession>
<sequence>MKEKYTVEKVYENIKVEDGIYKLSIKGEFEVRPGQFYLLRAWDIEPTLSRPISIYDADDEKISFLYSVVGKGTEILSKLKSGDEIKITGPLGNGFNVKRISGKVAIVCGGIGVAPMVYLAKNLKNCNVDFYAGFKTVSKTVDNVEKYVKELKLSTEDGSIGHKGYVTDNFKPEEYDYVLCCGPEIMMYKVVKMCEQKNVPVYISMEKKMACGIGACLVCTCKTKGGRRRACKEGPVFLGSELILND</sequence>
<comment type="function">
    <text evidence="1">Responsible for channeling the electrons from the oxidation of dihydroorotate from the FMN redox center in the PyrD type B subunit to the ultimate electron acceptor NAD(+).</text>
</comment>
<comment type="cofactor">
    <cofactor evidence="1">
        <name>[2Fe-2S] cluster</name>
        <dbReference type="ChEBI" id="CHEBI:190135"/>
    </cofactor>
    <text evidence="1">Binds 1 [2Fe-2S] cluster per subunit.</text>
</comment>
<comment type="cofactor">
    <cofactor evidence="1">
        <name>FAD</name>
        <dbReference type="ChEBI" id="CHEBI:57692"/>
    </cofactor>
    <text evidence="1">Binds 1 FAD per subunit.</text>
</comment>
<comment type="pathway">
    <text evidence="1">Pyrimidine metabolism; UMP biosynthesis via de novo pathway; orotate from (S)-dihydroorotate (NAD(+) route): step 1/1.</text>
</comment>
<comment type="subunit">
    <text evidence="1">Heterotetramer of 2 PyrK and 2 PyrD type B subunits.</text>
</comment>
<comment type="similarity">
    <text evidence="1">Belongs to the PyrK family.</text>
</comment>
<name>PYRK_CLOAB</name>
<evidence type="ECO:0000255" key="1">
    <source>
        <dbReference type="HAMAP-Rule" id="MF_01211"/>
    </source>
</evidence>
<protein>
    <recommendedName>
        <fullName evidence="1">Dihydroorotate dehydrogenase B (NAD(+)), electron transfer subunit</fullName>
    </recommendedName>
    <alternativeName>
        <fullName evidence="1">Dihydroorotate oxidase B, electron transfer subunit</fullName>
    </alternativeName>
</protein>
<proteinExistence type="inferred from homology"/>
<keyword id="KW-0001">2Fe-2S</keyword>
<keyword id="KW-0249">Electron transport</keyword>
<keyword id="KW-0274">FAD</keyword>
<keyword id="KW-0285">Flavoprotein</keyword>
<keyword id="KW-0408">Iron</keyword>
<keyword id="KW-0411">Iron-sulfur</keyword>
<keyword id="KW-0479">Metal-binding</keyword>
<keyword id="KW-0665">Pyrimidine biosynthesis</keyword>
<keyword id="KW-1185">Reference proteome</keyword>
<keyword id="KW-0813">Transport</keyword>